<keyword id="KW-0539">Nucleus</keyword>
<keyword id="KW-1185">Reference proteome</keyword>
<keyword id="KW-0804">Transcription</keyword>
<keyword id="KW-0805">Transcription regulation</keyword>
<comment type="function">
    <text evidence="3">Component of the NF-Y/HAP transcription factor complex. The NF-Y complex stimulates the transcription of various genes by recognizing and binding to a CCAAT motif in promoters. May act through association with MADS-box proteins. May regulate the expression of genes involved in flowering.</text>
</comment>
<comment type="subunit">
    <text evidence="1 3">Heterotrimeric transcription factor composed of three components, NF-YA, NF-YB and NF-YC. NF-YB and NF-YC must interact and dimerize for NF-YA association and DNA binding (By similarity). Interacts with MADS18. Forms a ternary complex with the MADS6-MADS18 heterodimer.</text>
</comment>
<comment type="subcellular location">
    <subcellularLocation>
        <location evidence="4">Nucleus</location>
    </subcellularLocation>
</comment>
<comment type="tissue specificity">
    <text evidence="3">Expressed in developing kernels.</text>
</comment>
<comment type="miscellaneous">
    <text>Probably not a component of a NF-Y/HAP transcription factor complex. Shows impaired association with NF-YA/HAP2 and CAAT motif binding.</text>
</comment>
<comment type="similarity">
    <text evidence="4">Belongs to the NFYB/HAP3 subunit family.</text>
</comment>
<comment type="sequence caution" evidence="4">
    <conflict type="erroneous gene model prediction">
        <sequence resource="EMBL-CDS" id="BAD12929"/>
    </conflict>
</comment>
<comment type="sequence caution" evidence="4">
    <conflict type="erroneous gene model prediction">
        <sequence resource="EMBL-CDS" id="BAD16076"/>
    </conflict>
</comment>
<dbReference type="EMBL" id="AJ300218">
    <property type="protein sequence ID" value="CAC37695.1"/>
    <property type="molecule type" value="mRNA"/>
</dbReference>
<dbReference type="EMBL" id="AP004179">
    <property type="protein sequence ID" value="BAD12929.1"/>
    <property type="status" value="ALT_SEQ"/>
    <property type="molecule type" value="Genomic_DNA"/>
</dbReference>
<dbReference type="EMBL" id="AP005284">
    <property type="protein sequence ID" value="BAD16076.1"/>
    <property type="status" value="ALT_SEQ"/>
    <property type="molecule type" value="Genomic_DNA"/>
</dbReference>
<dbReference type="EMBL" id="AP014958">
    <property type="protein sequence ID" value="BAS80696.1"/>
    <property type="molecule type" value="Genomic_DNA"/>
</dbReference>
<dbReference type="RefSeq" id="XP_015624776.1">
    <property type="nucleotide sequence ID" value="XM_015769290.1"/>
</dbReference>
<dbReference type="SMR" id="Q6Z348"/>
<dbReference type="FunCoup" id="Q6Z348">
    <property type="interactions" value="10"/>
</dbReference>
<dbReference type="STRING" id="39947.Q6Z348"/>
<dbReference type="PaxDb" id="39947-Q6Z348"/>
<dbReference type="EnsemblPlants" id="Os02t0725900-01">
    <property type="protein sequence ID" value="Os02t0725900-01"/>
    <property type="gene ID" value="Os02g0725900"/>
</dbReference>
<dbReference type="Gramene" id="Os02t0725900-01">
    <property type="protein sequence ID" value="Os02t0725900-01"/>
    <property type="gene ID" value="Os02g0725900"/>
</dbReference>
<dbReference type="eggNOG" id="KOG0869">
    <property type="taxonomic scope" value="Eukaryota"/>
</dbReference>
<dbReference type="HOGENOM" id="CLU_119759_0_0_1"/>
<dbReference type="InParanoid" id="Q6Z348"/>
<dbReference type="OMA" id="NTELPMA"/>
<dbReference type="OrthoDB" id="666592at2759"/>
<dbReference type="Proteomes" id="UP000000763">
    <property type="component" value="Chromosome 2"/>
</dbReference>
<dbReference type="Proteomes" id="UP000059680">
    <property type="component" value="Chromosome 2"/>
</dbReference>
<dbReference type="ExpressionAtlas" id="Q6Z348">
    <property type="expression patterns" value="baseline and differential"/>
</dbReference>
<dbReference type="GO" id="GO:0016602">
    <property type="term" value="C:CCAAT-binding factor complex"/>
    <property type="evidence" value="ECO:0000318"/>
    <property type="project" value="GO_Central"/>
</dbReference>
<dbReference type="GO" id="GO:0001228">
    <property type="term" value="F:DNA-binding transcription activator activity, RNA polymerase II-specific"/>
    <property type="evidence" value="ECO:0007669"/>
    <property type="project" value="InterPro"/>
</dbReference>
<dbReference type="GO" id="GO:0000981">
    <property type="term" value="F:DNA-binding transcription factor activity, RNA polymerase II-specific"/>
    <property type="evidence" value="ECO:0000318"/>
    <property type="project" value="GO_Central"/>
</dbReference>
<dbReference type="GO" id="GO:0046982">
    <property type="term" value="F:protein heterodimerization activity"/>
    <property type="evidence" value="ECO:0007669"/>
    <property type="project" value="InterPro"/>
</dbReference>
<dbReference type="GO" id="GO:0006357">
    <property type="term" value="P:regulation of transcription by RNA polymerase II"/>
    <property type="evidence" value="ECO:0000318"/>
    <property type="project" value="GO_Central"/>
</dbReference>
<dbReference type="CDD" id="cd22907">
    <property type="entry name" value="HFD_NFYB"/>
    <property type="match status" value="1"/>
</dbReference>
<dbReference type="Gene3D" id="1.10.20.10">
    <property type="entry name" value="Histone, subunit A"/>
    <property type="match status" value="1"/>
</dbReference>
<dbReference type="InterPro" id="IPR003958">
    <property type="entry name" value="CBFA_NFYB_domain"/>
</dbReference>
<dbReference type="InterPro" id="IPR009072">
    <property type="entry name" value="Histone-fold"/>
</dbReference>
<dbReference type="InterPro" id="IPR027113">
    <property type="entry name" value="Transc_fact_NFYB/HAP3"/>
</dbReference>
<dbReference type="PANTHER" id="PTHR11064">
    <property type="entry name" value="CCAAT-BINDING TRANSCRIPTION FACTOR-RELATED"/>
    <property type="match status" value="1"/>
</dbReference>
<dbReference type="PANTHER" id="PTHR11064:SF177">
    <property type="entry name" value="NUCLEAR TRANSCRIPTION FACTOR Y SUBUNIT B-1"/>
    <property type="match status" value="1"/>
</dbReference>
<dbReference type="Pfam" id="PF00808">
    <property type="entry name" value="CBFD_NFYB_HMF"/>
    <property type="match status" value="1"/>
</dbReference>
<dbReference type="SUPFAM" id="SSF47113">
    <property type="entry name" value="Histone-fold"/>
    <property type="match status" value="1"/>
</dbReference>
<feature type="chain" id="PRO_0000204626" description="Nuclear transcription factor Y subunit B-1">
    <location>
        <begin position="1"/>
        <end position="186"/>
    </location>
</feature>
<feature type="DNA-binding region" evidence="1">
    <location>
        <begin position="34"/>
        <end position="40"/>
    </location>
</feature>
<feature type="region of interest" description="Disordered" evidence="2">
    <location>
        <begin position="1"/>
        <end position="24"/>
    </location>
</feature>
<feature type="region of interest" description="Subunit association domain (SAD)" evidence="1">
    <location>
        <begin position="61"/>
        <end position="72"/>
    </location>
</feature>
<feature type="region of interest" description="Disordered" evidence="2">
    <location>
        <begin position="123"/>
        <end position="142"/>
    </location>
</feature>
<feature type="sequence conflict" description="In Ref. 1; CAC37695." evidence="4" ref="1">
    <original>K</original>
    <variation>E</variation>
    <location>
        <position position="16"/>
    </location>
</feature>
<feature type="sequence conflict" description="In Ref. 1; CAC37695." evidence="4" ref="1">
    <original>I</original>
    <variation>M</variation>
    <location>
        <position position="43"/>
    </location>
</feature>
<gene>
    <name type="primary">NFYB1</name>
    <name type="ordered locus">Os02g0725900</name>
    <name type="ordered locus">LOC_Os02g49410</name>
    <name type="ORF">B1121A12.5</name>
    <name type="ORF">OJ1124_G07.28</name>
</gene>
<sequence>MAGNKKRGGRNMDQVKKAAVRSDGVGGSATNAELPMANLVRLIKKVLPGKAKIGGAAKGLTHDCAVEFVGFVGDEASEKAKAEHRRTVAPEDYLGSFGDLGFDRYVDPMDAYIHGYREFERAGGNRRVAPPPPAAATPLTPGGPTFTDAELQFLRSVIPSRSDDEYSGSSPAIGGYGYGYGYGKNM</sequence>
<protein>
    <recommendedName>
        <fullName>Nuclear transcription factor Y subunit B-1</fullName>
    </recommendedName>
    <alternativeName>
        <fullName>CCAAT-binding transcription factor subunit NF-YB1</fullName>
    </alternativeName>
    <alternativeName>
        <fullName>OsNF-YB-1</fullName>
    </alternativeName>
</protein>
<accession>Q6Z348</accession>
<accession>Q94IM0</accession>
<name>NFYB1_ORYSJ</name>
<evidence type="ECO:0000250" key="1"/>
<evidence type="ECO:0000256" key="2">
    <source>
        <dbReference type="SAM" id="MobiDB-lite"/>
    </source>
</evidence>
<evidence type="ECO:0000269" key="3">
    <source>
    </source>
</evidence>
<evidence type="ECO:0000305" key="4"/>
<organism>
    <name type="scientific">Oryza sativa subsp. japonica</name>
    <name type="common">Rice</name>
    <dbReference type="NCBI Taxonomy" id="39947"/>
    <lineage>
        <taxon>Eukaryota</taxon>
        <taxon>Viridiplantae</taxon>
        <taxon>Streptophyta</taxon>
        <taxon>Embryophyta</taxon>
        <taxon>Tracheophyta</taxon>
        <taxon>Spermatophyta</taxon>
        <taxon>Magnoliopsida</taxon>
        <taxon>Liliopsida</taxon>
        <taxon>Poales</taxon>
        <taxon>Poaceae</taxon>
        <taxon>BOP clade</taxon>
        <taxon>Oryzoideae</taxon>
        <taxon>Oryzeae</taxon>
        <taxon>Oryzinae</taxon>
        <taxon>Oryza</taxon>
        <taxon>Oryza sativa</taxon>
    </lineage>
</organism>
<reference key="1">
    <citation type="journal article" date="2002" name="J. Biol. Chem.">
        <title>Ternary complex formation between MADS-box transcription factors and the histone fold protein NF-YB.</title>
        <authorList>
            <person name="Masiero S."/>
            <person name="Imbriano C."/>
            <person name="Ravasio F."/>
            <person name="Favaro R."/>
            <person name="Pelucchi N."/>
            <person name="Gorla M.S."/>
            <person name="Mantovani R."/>
            <person name="Colombo L."/>
            <person name="Kater M.M."/>
        </authorList>
    </citation>
    <scope>NUCLEOTIDE SEQUENCE [MRNA]</scope>
    <scope>FUNCTION</scope>
    <scope>INTERACTION WITH MADS18</scope>
    <scope>TISSUE SPECIFICITY</scope>
    <source>
        <strain>cv. Arborio</strain>
        <tissue>Ovary</tissue>
        <tissue>Seed</tissue>
    </source>
</reference>
<reference key="2">
    <citation type="journal article" date="2005" name="Nature">
        <title>The map-based sequence of the rice genome.</title>
        <authorList>
            <consortium name="International rice genome sequencing project (IRGSP)"/>
        </authorList>
    </citation>
    <scope>NUCLEOTIDE SEQUENCE [LARGE SCALE GENOMIC DNA]</scope>
    <source>
        <strain>cv. Nipponbare</strain>
    </source>
</reference>
<reference key="3">
    <citation type="journal article" date="2013" name="Rice">
        <title>Improvement of the Oryza sativa Nipponbare reference genome using next generation sequence and optical map data.</title>
        <authorList>
            <person name="Kawahara Y."/>
            <person name="de la Bastide M."/>
            <person name="Hamilton J.P."/>
            <person name="Kanamori H."/>
            <person name="McCombie W.R."/>
            <person name="Ouyang S."/>
            <person name="Schwartz D.C."/>
            <person name="Tanaka T."/>
            <person name="Wu J."/>
            <person name="Zhou S."/>
            <person name="Childs K.L."/>
            <person name="Davidson R.M."/>
            <person name="Lin H."/>
            <person name="Quesada-Ocampo L."/>
            <person name="Vaillancourt B."/>
            <person name="Sakai H."/>
            <person name="Lee S.S."/>
            <person name="Kim J."/>
            <person name="Numa H."/>
            <person name="Itoh T."/>
            <person name="Buell C.R."/>
            <person name="Matsumoto T."/>
        </authorList>
    </citation>
    <scope>GENOME REANNOTATION</scope>
    <source>
        <strain>cv. Nipponbare</strain>
    </source>
</reference>
<proteinExistence type="evidence at protein level"/>